<proteinExistence type="inferred from homology"/>
<name>Y4179_BACAH</name>
<keyword id="KW-1003">Cell membrane</keyword>
<keyword id="KW-0472">Membrane</keyword>
<keyword id="KW-0812">Transmembrane</keyword>
<keyword id="KW-1133">Transmembrane helix</keyword>
<organism>
    <name type="scientific">Bacillus thuringiensis (strain Al Hakam)</name>
    <dbReference type="NCBI Taxonomy" id="412694"/>
    <lineage>
        <taxon>Bacteria</taxon>
        <taxon>Bacillati</taxon>
        <taxon>Bacillota</taxon>
        <taxon>Bacilli</taxon>
        <taxon>Bacillales</taxon>
        <taxon>Bacillaceae</taxon>
        <taxon>Bacillus</taxon>
        <taxon>Bacillus cereus group</taxon>
    </lineage>
</organism>
<reference key="1">
    <citation type="journal article" date="2007" name="J. Bacteriol.">
        <title>The complete genome sequence of Bacillus thuringiensis Al Hakam.</title>
        <authorList>
            <person name="Challacombe J.F."/>
            <person name="Altherr M.R."/>
            <person name="Xie G."/>
            <person name="Bhotika S.S."/>
            <person name="Brown N."/>
            <person name="Bruce D."/>
            <person name="Campbell C.S."/>
            <person name="Campbell M.L."/>
            <person name="Chen J."/>
            <person name="Chertkov O."/>
            <person name="Cleland C."/>
            <person name="Dimitrijevic M."/>
            <person name="Doggett N.A."/>
            <person name="Fawcett J.J."/>
            <person name="Glavina T."/>
            <person name="Goodwin L.A."/>
            <person name="Green L.D."/>
            <person name="Han C.S."/>
            <person name="Hill K.K."/>
            <person name="Hitchcock P."/>
            <person name="Jackson P.J."/>
            <person name="Keim P."/>
            <person name="Kewalramani A.R."/>
            <person name="Longmire J."/>
            <person name="Lucas S."/>
            <person name="Malfatti S."/>
            <person name="Martinez D."/>
            <person name="McMurry K."/>
            <person name="Meincke L.J."/>
            <person name="Misra M."/>
            <person name="Moseman B.L."/>
            <person name="Mundt M."/>
            <person name="Munk A.C."/>
            <person name="Okinaka R.T."/>
            <person name="Parson-Quintana B."/>
            <person name="Reilly L.P."/>
            <person name="Richardson P."/>
            <person name="Robinson D.L."/>
            <person name="Saunders E."/>
            <person name="Tapia R."/>
            <person name="Tesmer J.G."/>
            <person name="Thayer N."/>
            <person name="Thompson L.S."/>
            <person name="Tice H."/>
            <person name="Ticknor L.O."/>
            <person name="Wills P.L."/>
            <person name="Gilna P."/>
            <person name="Brettin T.S."/>
        </authorList>
    </citation>
    <scope>NUCLEOTIDE SEQUENCE [LARGE SCALE GENOMIC DNA]</scope>
    <source>
        <strain>Al Hakam</strain>
    </source>
</reference>
<dbReference type="EMBL" id="CP000485">
    <property type="protein sequence ID" value="ABK87386.1"/>
    <property type="molecule type" value="Genomic_DNA"/>
</dbReference>
<dbReference type="RefSeq" id="WP_000625507.1">
    <property type="nucleotide sequence ID" value="NC_008600.1"/>
</dbReference>
<dbReference type="KEGG" id="btl:BALH_4179"/>
<dbReference type="HOGENOM" id="CLU_125889_1_0_9"/>
<dbReference type="GO" id="GO:0005886">
    <property type="term" value="C:plasma membrane"/>
    <property type="evidence" value="ECO:0007669"/>
    <property type="project" value="UniProtKB-SubCell"/>
</dbReference>
<dbReference type="HAMAP" id="MF_01874">
    <property type="entry name" value="UPF0756"/>
    <property type="match status" value="1"/>
</dbReference>
<dbReference type="InterPro" id="IPR007382">
    <property type="entry name" value="UPF0756_TM"/>
</dbReference>
<dbReference type="PANTHER" id="PTHR38452">
    <property type="entry name" value="UPF0756 MEMBRANE PROTEIN YEAL"/>
    <property type="match status" value="1"/>
</dbReference>
<dbReference type="PANTHER" id="PTHR38452:SF1">
    <property type="entry name" value="UPF0756 MEMBRANE PROTEIN YEAL"/>
    <property type="match status" value="1"/>
</dbReference>
<dbReference type="Pfam" id="PF04284">
    <property type="entry name" value="DUF441"/>
    <property type="match status" value="1"/>
</dbReference>
<sequence>MISQSTLFLFILLIIGLIAKNQSLTVAIGVLFLLKFTFLGDKVFPYLQTKGINLGVTVITIAVLVPIATGEIGFKQLGEAAKSYYAWIALASGVAVALLAKGGVQLLTTDPHITTALVFGTIIAVALFNGVAVGPLIGAGIAYAVMSIIQMFK</sequence>
<feature type="chain" id="PRO_0000388835" description="UPF0756 membrane protein BALH_4179">
    <location>
        <begin position="1"/>
        <end position="153"/>
    </location>
</feature>
<feature type="transmembrane region" description="Helical" evidence="1">
    <location>
        <begin position="8"/>
        <end position="28"/>
    </location>
</feature>
<feature type="transmembrane region" description="Helical" evidence="1">
    <location>
        <begin position="54"/>
        <end position="74"/>
    </location>
</feature>
<feature type="transmembrane region" description="Helical" evidence="1">
    <location>
        <begin position="87"/>
        <end position="107"/>
    </location>
</feature>
<feature type="transmembrane region" description="Helical" evidence="1">
    <location>
        <begin position="117"/>
        <end position="137"/>
    </location>
</feature>
<evidence type="ECO:0000255" key="1">
    <source>
        <dbReference type="HAMAP-Rule" id="MF_01874"/>
    </source>
</evidence>
<protein>
    <recommendedName>
        <fullName evidence="1">UPF0756 membrane protein BALH_4179</fullName>
    </recommendedName>
</protein>
<accession>A0RJJ3</accession>
<comment type="subcellular location">
    <subcellularLocation>
        <location evidence="1">Cell membrane</location>
        <topology evidence="1">Multi-pass membrane protein</topology>
    </subcellularLocation>
</comment>
<comment type="similarity">
    <text evidence="1">Belongs to the UPF0756 family.</text>
</comment>
<gene>
    <name type="ordered locus">BALH_4179</name>
</gene>